<gene>
    <name evidence="1" type="primary">rpsN</name>
    <name type="ordered locus">Nmul_A0780</name>
</gene>
<reference key="1">
    <citation type="submission" date="2005-08" db="EMBL/GenBank/DDBJ databases">
        <title>Complete sequence of chromosome 1 of Nitrosospira multiformis ATCC 25196.</title>
        <authorList>
            <person name="Copeland A."/>
            <person name="Lucas S."/>
            <person name="Lapidus A."/>
            <person name="Barry K."/>
            <person name="Detter J.C."/>
            <person name="Glavina T."/>
            <person name="Hammon N."/>
            <person name="Israni S."/>
            <person name="Pitluck S."/>
            <person name="Chain P."/>
            <person name="Malfatti S."/>
            <person name="Shin M."/>
            <person name="Vergez L."/>
            <person name="Schmutz J."/>
            <person name="Larimer F."/>
            <person name="Land M."/>
            <person name="Hauser L."/>
            <person name="Kyrpides N."/>
            <person name="Lykidis A."/>
            <person name="Richardson P."/>
        </authorList>
    </citation>
    <scope>NUCLEOTIDE SEQUENCE [LARGE SCALE GENOMIC DNA]</scope>
    <source>
        <strain>ATCC 25196 / NCIMB 11849 / C 71</strain>
    </source>
</reference>
<comment type="function">
    <text evidence="1">Binds 16S rRNA, required for the assembly of 30S particles and may also be responsible for determining the conformation of the 16S rRNA at the A site.</text>
</comment>
<comment type="subunit">
    <text evidence="1">Part of the 30S ribosomal subunit. Contacts proteins S3 and S10.</text>
</comment>
<comment type="similarity">
    <text evidence="1">Belongs to the universal ribosomal protein uS14 family.</text>
</comment>
<dbReference type="EMBL" id="CP000103">
    <property type="protein sequence ID" value="ABB74087.1"/>
    <property type="molecule type" value="Genomic_DNA"/>
</dbReference>
<dbReference type="RefSeq" id="WP_011380136.1">
    <property type="nucleotide sequence ID" value="NC_007614.1"/>
</dbReference>
<dbReference type="SMR" id="Q2YAY4"/>
<dbReference type="STRING" id="323848.Nmul_A0780"/>
<dbReference type="KEGG" id="nmu:Nmul_A0780"/>
<dbReference type="eggNOG" id="COG0199">
    <property type="taxonomic scope" value="Bacteria"/>
</dbReference>
<dbReference type="HOGENOM" id="CLU_139869_0_1_4"/>
<dbReference type="OrthoDB" id="9810484at2"/>
<dbReference type="Proteomes" id="UP000002718">
    <property type="component" value="Chromosome"/>
</dbReference>
<dbReference type="GO" id="GO:0005737">
    <property type="term" value="C:cytoplasm"/>
    <property type="evidence" value="ECO:0007669"/>
    <property type="project" value="UniProtKB-ARBA"/>
</dbReference>
<dbReference type="GO" id="GO:0015935">
    <property type="term" value="C:small ribosomal subunit"/>
    <property type="evidence" value="ECO:0007669"/>
    <property type="project" value="TreeGrafter"/>
</dbReference>
<dbReference type="GO" id="GO:0019843">
    <property type="term" value="F:rRNA binding"/>
    <property type="evidence" value="ECO:0007669"/>
    <property type="project" value="UniProtKB-UniRule"/>
</dbReference>
<dbReference type="GO" id="GO:0003735">
    <property type="term" value="F:structural constituent of ribosome"/>
    <property type="evidence" value="ECO:0007669"/>
    <property type="project" value="InterPro"/>
</dbReference>
<dbReference type="GO" id="GO:0006412">
    <property type="term" value="P:translation"/>
    <property type="evidence" value="ECO:0007669"/>
    <property type="project" value="UniProtKB-UniRule"/>
</dbReference>
<dbReference type="FunFam" id="1.10.287.1480:FF:000001">
    <property type="entry name" value="30S ribosomal protein S14"/>
    <property type="match status" value="1"/>
</dbReference>
<dbReference type="Gene3D" id="1.10.287.1480">
    <property type="match status" value="1"/>
</dbReference>
<dbReference type="HAMAP" id="MF_00537">
    <property type="entry name" value="Ribosomal_uS14_1"/>
    <property type="match status" value="1"/>
</dbReference>
<dbReference type="InterPro" id="IPR001209">
    <property type="entry name" value="Ribosomal_uS14"/>
</dbReference>
<dbReference type="InterPro" id="IPR023036">
    <property type="entry name" value="Ribosomal_uS14_bac/plastid"/>
</dbReference>
<dbReference type="NCBIfam" id="NF006477">
    <property type="entry name" value="PRK08881.1"/>
    <property type="match status" value="1"/>
</dbReference>
<dbReference type="PANTHER" id="PTHR19836">
    <property type="entry name" value="30S RIBOSOMAL PROTEIN S14"/>
    <property type="match status" value="1"/>
</dbReference>
<dbReference type="PANTHER" id="PTHR19836:SF19">
    <property type="entry name" value="SMALL RIBOSOMAL SUBUNIT PROTEIN US14M"/>
    <property type="match status" value="1"/>
</dbReference>
<dbReference type="Pfam" id="PF00253">
    <property type="entry name" value="Ribosomal_S14"/>
    <property type="match status" value="1"/>
</dbReference>
<dbReference type="SUPFAM" id="SSF57716">
    <property type="entry name" value="Glucocorticoid receptor-like (DNA-binding domain)"/>
    <property type="match status" value="1"/>
</dbReference>
<name>RS14_NITMU</name>
<sequence>MAKVAVINRDLKRRKIVKKFEARRAELLATINDASVSDEDRHSARIKLQMLPRNASPVRLRNRCSLTGRPRGVYSKFGLGRGKLRDIAMSGEIPGMIKASW</sequence>
<organism>
    <name type="scientific">Nitrosospira multiformis (strain ATCC 25196 / NCIMB 11849 / C 71)</name>
    <dbReference type="NCBI Taxonomy" id="323848"/>
    <lineage>
        <taxon>Bacteria</taxon>
        <taxon>Pseudomonadati</taxon>
        <taxon>Pseudomonadota</taxon>
        <taxon>Betaproteobacteria</taxon>
        <taxon>Nitrosomonadales</taxon>
        <taxon>Nitrosomonadaceae</taxon>
        <taxon>Nitrosospira</taxon>
    </lineage>
</organism>
<feature type="chain" id="PRO_1000128467" description="Small ribosomal subunit protein uS14">
    <location>
        <begin position="1"/>
        <end position="101"/>
    </location>
</feature>
<protein>
    <recommendedName>
        <fullName evidence="1">Small ribosomal subunit protein uS14</fullName>
    </recommendedName>
    <alternativeName>
        <fullName evidence="2">30S ribosomal protein S14</fullName>
    </alternativeName>
</protein>
<keyword id="KW-1185">Reference proteome</keyword>
<keyword id="KW-0687">Ribonucleoprotein</keyword>
<keyword id="KW-0689">Ribosomal protein</keyword>
<keyword id="KW-0694">RNA-binding</keyword>
<keyword id="KW-0699">rRNA-binding</keyword>
<accession>Q2YAY4</accession>
<evidence type="ECO:0000255" key="1">
    <source>
        <dbReference type="HAMAP-Rule" id="MF_00537"/>
    </source>
</evidence>
<evidence type="ECO:0000305" key="2"/>
<proteinExistence type="inferred from homology"/>